<proteinExistence type="inferred from homology"/>
<dbReference type="EMBL" id="CP000468">
    <property type="protein sequence ID" value="ABJ03142.1"/>
    <property type="status" value="ALT_INIT"/>
    <property type="molecule type" value="Genomic_DNA"/>
</dbReference>
<dbReference type="RefSeq" id="WP_011478308.1">
    <property type="nucleotide sequence ID" value="NZ_CADILS010000011.1"/>
</dbReference>
<dbReference type="SMR" id="A1AHK2"/>
<dbReference type="KEGG" id="ecv:APECO1_2790"/>
<dbReference type="HOGENOM" id="CLU_001265_61_1_6"/>
<dbReference type="Proteomes" id="UP000008216">
    <property type="component" value="Chromosome"/>
</dbReference>
<dbReference type="GO" id="GO:0005886">
    <property type="term" value="C:plasma membrane"/>
    <property type="evidence" value="ECO:0007669"/>
    <property type="project" value="UniProtKB-SubCell"/>
</dbReference>
<dbReference type="GO" id="GO:0015297">
    <property type="term" value="F:antiporter activity"/>
    <property type="evidence" value="ECO:0007669"/>
    <property type="project" value="UniProtKB-KW"/>
</dbReference>
<dbReference type="GO" id="GO:0015211">
    <property type="term" value="F:purine nucleoside transmembrane transporter activity"/>
    <property type="evidence" value="ECO:0007669"/>
    <property type="project" value="UniProtKB-UniRule"/>
</dbReference>
<dbReference type="CDD" id="cd17324">
    <property type="entry name" value="MFS_NepI_like"/>
    <property type="match status" value="1"/>
</dbReference>
<dbReference type="FunFam" id="1.20.1250.20:FF:000113">
    <property type="entry name" value="Purine ribonucleoside efflux pump NepI"/>
    <property type="match status" value="1"/>
</dbReference>
<dbReference type="Gene3D" id="1.20.1250.20">
    <property type="entry name" value="MFS general substrate transporter like domains"/>
    <property type="match status" value="1"/>
</dbReference>
<dbReference type="HAMAP" id="MF_01189">
    <property type="entry name" value="MFS_NepI"/>
    <property type="match status" value="1"/>
</dbReference>
<dbReference type="InterPro" id="IPR011701">
    <property type="entry name" value="MFS"/>
</dbReference>
<dbReference type="InterPro" id="IPR020846">
    <property type="entry name" value="MFS_dom"/>
</dbReference>
<dbReference type="InterPro" id="IPR050189">
    <property type="entry name" value="MFS_Efflux_Transporters"/>
</dbReference>
<dbReference type="InterPro" id="IPR023680">
    <property type="entry name" value="MFS_NepI"/>
</dbReference>
<dbReference type="InterPro" id="IPR036259">
    <property type="entry name" value="MFS_trans_sf"/>
</dbReference>
<dbReference type="NCBIfam" id="NF007578">
    <property type="entry name" value="PRK10213.1"/>
    <property type="match status" value="1"/>
</dbReference>
<dbReference type="PANTHER" id="PTHR43124">
    <property type="entry name" value="PURINE EFFLUX PUMP PBUE"/>
    <property type="match status" value="1"/>
</dbReference>
<dbReference type="PANTHER" id="PTHR43124:SF5">
    <property type="entry name" value="PURINE RIBONUCLEOSIDE EFFLUX PUMP NEPI"/>
    <property type="match status" value="1"/>
</dbReference>
<dbReference type="Pfam" id="PF07690">
    <property type="entry name" value="MFS_1"/>
    <property type="match status" value="1"/>
</dbReference>
<dbReference type="SUPFAM" id="SSF103473">
    <property type="entry name" value="MFS general substrate transporter"/>
    <property type="match status" value="1"/>
</dbReference>
<dbReference type="PROSITE" id="PS50850">
    <property type="entry name" value="MFS"/>
    <property type="match status" value="1"/>
</dbReference>
<accession>A1AHK2</accession>
<name>NEPI_ECOK1</name>
<comment type="function">
    <text evidence="1">Involved in the efflux of purine ribonucleosides, such as inosine and guanosine.</text>
</comment>
<comment type="catalytic activity">
    <reaction evidence="1">
        <text>inosine(in) + H(+)(out) = inosine(out) + H(+)(in)</text>
        <dbReference type="Rhea" id="RHEA:29211"/>
        <dbReference type="ChEBI" id="CHEBI:15378"/>
        <dbReference type="ChEBI" id="CHEBI:17596"/>
    </reaction>
    <physiologicalReaction direction="left-to-right" evidence="1">
        <dbReference type="Rhea" id="RHEA:29212"/>
    </physiologicalReaction>
</comment>
<comment type="catalytic activity">
    <reaction evidence="1">
        <text>guanosine(in) + H(+)(out) = guanosine(out) + H(+)(in)</text>
        <dbReference type="Rhea" id="RHEA:29583"/>
        <dbReference type="ChEBI" id="CHEBI:15378"/>
        <dbReference type="ChEBI" id="CHEBI:16750"/>
    </reaction>
    <physiologicalReaction direction="left-to-right" evidence="1">
        <dbReference type="Rhea" id="RHEA:29584"/>
    </physiologicalReaction>
</comment>
<comment type="subcellular location">
    <subcellularLocation>
        <location evidence="1">Cell inner membrane</location>
        <topology evidence="1">Multi-pass membrane protein</topology>
    </subcellularLocation>
</comment>
<comment type="similarity">
    <text evidence="1">Belongs to the major facilitator superfamily. DHA1 family. NepI (TC 2.A.1.2.26) subfamily.</text>
</comment>
<comment type="sequence caution" evidence="2">
    <conflict type="erroneous initiation">
        <sequence resource="EMBL-CDS" id="ABJ03142"/>
    </conflict>
</comment>
<organism>
    <name type="scientific">Escherichia coli O1:K1 / APEC</name>
    <dbReference type="NCBI Taxonomy" id="405955"/>
    <lineage>
        <taxon>Bacteria</taxon>
        <taxon>Pseudomonadati</taxon>
        <taxon>Pseudomonadota</taxon>
        <taxon>Gammaproteobacteria</taxon>
        <taxon>Enterobacterales</taxon>
        <taxon>Enterobacteriaceae</taxon>
        <taxon>Escherichia</taxon>
    </lineage>
</organism>
<keyword id="KW-0050">Antiport</keyword>
<keyword id="KW-0997">Cell inner membrane</keyword>
<keyword id="KW-1003">Cell membrane</keyword>
<keyword id="KW-0472">Membrane</keyword>
<keyword id="KW-1185">Reference proteome</keyword>
<keyword id="KW-0812">Transmembrane</keyword>
<keyword id="KW-1133">Transmembrane helix</keyword>
<keyword id="KW-0813">Transport</keyword>
<evidence type="ECO:0000255" key="1">
    <source>
        <dbReference type="HAMAP-Rule" id="MF_01189"/>
    </source>
</evidence>
<evidence type="ECO:0000305" key="2"/>
<sequence>MSEFIAENRGADAITRPNWSAVFSVAFCVACLIIVEFLPVSLLTPMAQDLGISEGVAGQSVTVTAFVAMFASLFITQTIQATDRRYVVILFAVLLTLSCLLVSFANSFSLLLIGRACLGLALGGFWAMSASLTMRLVPPRTVPKALSVIFGAVSIALVIAAPLGSFLGELIGWRNVFNAAAAMGVLCIFWIIKSLPSLPGEPSHQKQNTFRLLQRPGVMAGMIAIFMSFAGQFAFFTYIRPVYMNLAGFGVDGLTLVLLSFGIASFVGTSLSSFILKRSVKLALAGAPFVLALSALVLTLWGSDKIVATGVAIIWGLTFALIPVGWSTWITRSLADQAEKAGSIQVAVIQLANTCGAAIGGYALDNIGLTSPLMLSGTLMLLTALLVTAKVKMKKS</sequence>
<feature type="chain" id="PRO_0000294110" description="Purine ribonucleoside efflux pump NepI">
    <location>
        <begin position="1"/>
        <end position="396"/>
    </location>
</feature>
<feature type="topological domain" description="Cytoplasmic" evidence="1">
    <location>
        <begin position="1"/>
        <end position="21"/>
    </location>
</feature>
<feature type="transmembrane region" description="Helical" evidence="1">
    <location>
        <begin position="22"/>
        <end position="42"/>
    </location>
</feature>
<feature type="topological domain" description="Periplasmic" evidence="1">
    <location>
        <begin position="43"/>
        <end position="54"/>
    </location>
</feature>
<feature type="transmembrane region" description="Helical" evidence="1">
    <location>
        <begin position="55"/>
        <end position="75"/>
    </location>
</feature>
<feature type="topological domain" description="Cytoplasmic" evidence="1">
    <location>
        <begin position="76"/>
        <end position="85"/>
    </location>
</feature>
<feature type="transmembrane region" description="Helical" evidence="1">
    <location>
        <begin position="86"/>
        <end position="106"/>
    </location>
</feature>
<feature type="topological domain" description="Periplasmic" evidence="1">
    <location>
        <position position="107"/>
    </location>
</feature>
<feature type="transmembrane region" description="Helical" evidence="1">
    <location>
        <begin position="108"/>
        <end position="128"/>
    </location>
</feature>
<feature type="topological domain" description="Cytoplasmic" evidence="1">
    <location>
        <begin position="129"/>
        <end position="147"/>
    </location>
</feature>
<feature type="transmembrane region" description="Helical" evidence="1">
    <location>
        <begin position="148"/>
        <end position="168"/>
    </location>
</feature>
<feature type="topological domain" description="Periplasmic" evidence="1">
    <location>
        <begin position="169"/>
        <end position="175"/>
    </location>
</feature>
<feature type="transmembrane region" description="Helical" evidence="1">
    <location>
        <begin position="176"/>
        <end position="196"/>
    </location>
</feature>
<feature type="topological domain" description="Cytoplasmic" evidence="1">
    <location>
        <begin position="197"/>
        <end position="215"/>
    </location>
</feature>
<feature type="transmembrane region" description="Helical" evidence="1">
    <location>
        <begin position="216"/>
        <end position="236"/>
    </location>
</feature>
<feature type="topological domain" description="Periplasmic" evidence="1">
    <location>
        <begin position="237"/>
        <end position="255"/>
    </location>
</feature>
<feature type="transmembrane region" description="Helical" evidence="1">
    <location>
        <begin position="256"/>
        <end position="276"/>
    </location>
</feature>
<feature type="topological domain" description="Cytoplasmic" evidence="1">
    <location>
        <begin position="277"/>
        <end position="281"/>
    </location>
</feature>
<feature type="transmembrane region" description="Helical" evidence="1">
    <location>
        <begin position="282"/>
        <end position="302"/>
    </location>
</feature>
<feature type="topological domain" description="Periplasmic" evidence="1">
    <location>
        <begin position="303"/>
        <end position="305"/>
    </location>
</feature>
<feature type="transmembrane region" description="Helical" evidence="1">
    <location>
        <begin position="306"/>
        <end position="326"/>
    </location>
</feature>
<feature type="topological domain" description="Cytoplasmic" evidence="1">
    <location>
        <begin position="327"/>
        <end position="343"/>
    </location>
</feature>
<feature type="transmembrane region" description="Helical" evidence="1">
    <location>
        <begin position="344"/>
        <end position="364"/>
    </location>
</feature>
<feature type="topological domain" description="Periplasmic" evidence="1">
    <location>
        <begin position="365"/>
        <end position="366"/>
    </location>
</feature>
<feature type="transmembrane region" description="Helical" evidence="1">
    <location>
        <begin position="367"/>
        <end position="387"/>
    </location>
</feature>
<feature type="topological domain" description="Cytoplasmic" evidence="1">
    <location>
        <begin position="388"/>
        <end position="396"/>
    </location>
</feature>
<protein>
    <recommendedName>
        <fullName evidence="1">Purine ribonucleoside efflux pump NepI</fullName>
    </recommendedName>
</protein>
<reference key="1">
    <citation type="journal article" date="2007" name="J. Bacteriol.">
        <title>The genome sequence of avian pathogenic Escherichia coli strain O1:K1:H7 shares strong similarities with human extraintestinal pathogenic E. coli genomes.</title>
        <authorList>
            <person name="Johnson T.J."/>
            <person name="Kariyawasam S."/>
            <person name="Wannemuehler Y."/>
            <person name="Mangiamele P."/>
            <person name="Johnson S.J."/>
            <person name="Doetkott C."/>
            <person name="Skyberg J.A."/>
            <person name="Lynne A.M."/>
            <person name="Johnson J.R."/>
            <person name="Nolan L.K."/>
        </authorList>
    </citation>
    <scope>NUCLEOTIDE SEQUENCE [LARGE SCALE GENOMIC DNA]</scope>
</reference>
<gene>
    <name evidence="1" type="primary">nepI</name>
    <name type="ordered locus">Ecok1_36480</name>
    <name type="ORF">APECO1_2790</name>
</gene>